<evidence type="ECO:0000255" key="1"/>
<evidence type="ECO:0000305" key="2"/>
<proteinExistence type="predicted"/>
<organism>
    <name type="scientific">Aquifex aeolicus (strain VF5)</name>
    <dbReference type="NCBI Taxonomy" id="224324"/>
    <lineage>
        <taxon>Bacteria</taxon>
        <taxon>Pseudomonadati</taxon>
        <taxon>Aquificota</taxon>
        <taxon>Aquificia</taxon>
        <taxon>Aquificales</taxon>
        <taxon>Aquificaceae</taxon>
        <taxon>Aquifex</taxon>
    </lineage>
</organism>
<dbReference type="EMBL" id="AE000657">
    <property type="protein sequence ID" value="AAC07516.1"/>
    <property type="molecule type" value="Genomic_DNA"/>
</dbReference>
<dbReference type="PIR" id="G70439">
    <property type="entry name" value="G70439"/>
</dbReference>
<dbReference type="RefSeq" id="NP_214110.1">
    <property type="nucleotide sequence ID" value="NC_000918.1"/>
</dbReference>
<dbReference type="RefSeq" id="WP_010881048.1">
    <property type="nucleotide sequence ID" value="NC_000918.1"/>
</dbReference>
<dbReference type="STRING" id="224324.aq_1618"/>
<dbReference type="EnsemblBacteria" id="AAC07516">
    <property type="protein sequence ID" value="AAC07516"/>
    <property type="gene ID" value="aq_1618"/>
</dbReference>
<dbReference type="KEGG" id="aae:aq_1618"/>
<dbReference type="eggNOG" id="COG0658">
    <property type="taxonomic scope" value="Bacteria"/>
</dbReference>
<dbReference type="HOGENOM" id="CLU_665539_0_0_0"/>
<dbReference type="InParanoid" id="O67545"/>
<dbReference type="OrthoDB" id="13619at2"/>
<dbReference type="Proteomes" id="UP000000798">
    <property type="component" value="Chromosome"/>
</dbReference>
<dbReference type="GO" id="GO:0005886">
    <property type="term" value="C:plasma membrane"/>
    <property type="evidence" value="ECO:0007669"/>
    <property type="project" value="UniProtKB-SubCell"/>
</dbReference>
<dbReference type="InterPro" id="IPR004477">
    <property type="entry name" value="ComEC_N"/>
</dbReference>
<dbReference type="InterPro" id="IPR052159">
    <property type="entry name" value="Competence_DNA_uptake"/>
</dbReference>
<dbReference type="NCBIfam" id="TIGR00360">
    <property type="entry name" value="ComEC_N-term"/>
    <property type="match status" value="1"/>
</dbReference>
<dbReference type="PANTHER" id="PTHR30619">
    <property type="entry name" value="DNA INTERNALIZATION/COMPETENCE PROTEIN COMEC/REC2"/>
    <property type="match status" value="1"/>
</dbReference>
<dbReference type="PANTHER" id="PTHR30619:SF1">
    <property type="entry name" value="RECOMBINATION PROTEIN 2"/>
    <property type="match status" value="1"/>
</dbReference>
<dbReference type="Pfam" id="PF03772">
    <property type="entry name" value="Competence"/>
    <property type="match status" value="1"/>
</dbReference>
<protein>
    <recommendedName>
        <fullName>Uncharacterized protein aq_1618</fullName>
    </recommendedName>
</protein>
<name>Y1618_AQUAE</name>
<accession>O67545</accession>
<feature type="chain" id="PRO_0000186939" description="Uncharacterized protein aq_1618">
    <location>
        <begin position="1"/>
        <end position="413"/>
    </location>
</feature>
<feature type="transmembrane region" description="Helical" evidence="1">
    <location>
        <begin position="10"/>
        <end position="32"/>
    </location>
</feature>
<feature type="transmembrane region" description="Helical" evidence="1">
    <location>
        <begin position="162"/>
        <end position="184"/>
    </location>
</feature>
<feature type="transmembrane region" description="Helical" evidence="1">
    <location>
        <begin position="189"/>
        <end position="211"/>
    </location>
</feature>
<feature type="transmembrane region" description="Helical" evidence="1">
    <location>
        <begin position="232"/>
        <end position="254"/>
    </location>
</feature>
<feature type="transmembrane region" description="Helical" evidence="1">
    <location>
        <begin position="259"/>
        <end position="276"/>
    </location>
</feature>
<feature type="transmembrane region" description="Helical" evidence="1">
    <location>
        <begin position="288"/>
        <end position="310"/>
    </location>
</feature>
<feature type="transmembrane region" description="Helical" evidence="1">
    <location>
        <begin position="325"/>
        <end position="347"/>
    </location>
</feature>
<comment type="subcellular location">
    <subcellularLocation>
        <location evidence="2">Cell membrane</location>
        <topology evidence="2">Multi-pass membrane protein</topology>
    </subcellularLocation>
</comment>
<reference key="1">
    <citation type="journal article" date="1998" name="Nature">
        <title>The complete genome of the hyperthermophilic bacterium Aquifex aeolicus.</title>
        <authorList>
            <person name="Deckert G."/>
            <person name="Warren P.V."/>
            <person name="Gaasterland T."/>
            <person name="Young W.G."/>
            <person name="Lenox A.L."/>
            <person name="Graham D.E."/>
            <person name="Overbeek R."/>
            <person name="Snead M.A."/>
            <person name="Keller M."/>
            <person name="Aujay M."/>
            <person name="Huber R."/>
            <person name="Feldman R.A."/>
            <person name="Short J.M."/>
            <person name="Olsen G.J."/>
            <person name="Swanson R.V."/>
        </authorList>
    </citation>
    <scope>NUCLEOTIDE SEQUENCE [LARGE SCALE GENOMIC DNA]</scope>
    <source>
        <strain>VF5</strain>
    </source>
</reference>
<gene>
    <name type="ordered locus">aq_1618</name>
</gene>
<sequence length="413" mass="47050">MDFLRKLPLGLTIHLSLFLLSLLYALNAGRLPELKDYIIYFKVRLEGQWELSEDGVSAPVFVEESEIEFLKGRKAFLFVKKARYIPKGSRFELFGNVRVKKNRVFISAYIWDLERLPEKKNIRDFLMEKFKEKVKDEHLRAIGLAFLFGESKRNLPAEVERVFLHTGLIHVLVVSGLHVGLVFLILSRLLPRFYGEVLGLVGVLFYSAFLVPHNPPVIRATSMLFLWVLSFLSFRRYCSLCVLFFTGTLMLFFFPHFSYSYSFWLSFFAVLYILLVLKDFEGGNTSKALMVSLGAFTGTAPLIASFSFVTPLSVLLTPVLSPLIFAYALFGVLSLLTLFSFPPSLILMNLSGELIFRVLEFFSDFSPKILSNVKPEEAFILLILGAIGLYVTKGYSKLLPLGVVNLYLIFKIN</sequence>
<keyword id="KW-1003">Cell membrane</keyword>
<keyword id="KW-0472">Membrane</keyword>
<keyword id="KW-1185">Reference proteome</keyword>
<keyword id="KW-0812">Transmembrane</keyword>
<keyword id="KW-1133">Transmembrane helix</keyword>